<sequence>MNTAGRLLLLCLVLGLVFESLGIPVADDLEADRDTDPDEKDPSVHNYWRNVNCGGVPCKFGCCREDRCREIDCD</sequence>
<reference key="1">
    <citation type="journal article" date="2014" name="PLoS ONE">
        <title>Diversity of conotoxin gene superfamilies in the venomous snail, Conus victoriae.</title>
        <authorList>
            <person name="Robinson S.D."/>
            <person name="Safavi-Hemami H."/>
            <person name="McIntosh L.D."/>
            <person name="Purcell A.W."/>
            <person name="Norton R.S."/>
            <person name="Papenfuss A.T."/>
        </authorList>
    </citation>
    <scope>NUCLEOTIDE SEQUENCE [MRNA]</scope>
    <source>
        <tissue>Venom duct</tissue>
    </source>
</reference>
<reference key="2">
    <citation type="journal article" date="2015" name="J. Proteomics">
        <title>Discovery by proteogenomics and characterization of an RF-amide neuropeptide from cone snail venom.</title>
        <authorList>
            <person name="Robinson S.D."/>
            <person name="Safavi-Hemami H."/>
            <person name="Raghuraman S."/>
            <person name="Imperial J.S."/>
            <person name="Papenfuss A.T."/>
            <person name="Teichert R.W."/>
            <person name="Purcell A.W."/>
            <person name="Olivera B.M."/>
            <person name="Norton R.S."/>
        </authorList>
    </citation>
    <scope>NUCLEOTIDE SEQUENCE [MRNA]</scope>
    <scope>IDENTIFICATION BY MASS SPECTROMETRY</scope>
    <scope>SUBCELLULAR LOCATION</scope>
    <source>
        <tissue>Venom</tissue>
        <tissue>Venom duct</tissue>
    </source>
</reference>
<reference key="3">
    <citation type="journal article" date="2019" name="J. Biol. Chem.">
        <title>The three-dimensional structure of an H-superfamily conotoxin reveals a granulin fold arising from a common ICK cysteine framework.</title>
        <authorList>
            <person name="Nielsen L.D."/>
            <person name="Foged M.M."/>
            <person name="Albert A."/>
            <person name="Bertelsen A.B."/>
            <person name="Soeltoft C.L."/>
            <person name="Robinson S.D."/>
            <person name="Petersen S.V."/>
            <person name="Purcell A.W."/>
            <person name="Olivera B.M."/>
            <person name="Norton R.S."/>
            <person name="Vasskog T."/>
            <person name="Safavi-Hemami H."/>
            <person name="Teilum K."/>
            <person name="Ellgaard L."/>
        </authorList>
    </citation>
    <scope>STRUCTURE BY NMR OF 50-74</scope>
    <scope>PROTEIN SEQUENCE OF 50-74</scope>
    <scope>FUNCTION</scope>
    <scope>DISULFIDE BOND</scope>
    <scope>MASS SPECTROMETRY</scope>
    <source>
        <tissue>Venom</tissue>
    </source>
</reference>
<protein>
    <recommendedName>
        <fullName evidence="6">Conotoxin Vc7.2</fullName>
    </recommendedName>
    <alternativeName>
        <fullName evidence="4 5">H-Vc7.2</fullName>
    </alternativeName>
</protein>
<feature type="signal peptide" evidence="1">
    <location>
        <begin position="1"/>
        <end position="22"/>
    </location>
</feature>
<feature type="propeptide" id="PRO_0000439427" evidence="8">
    <location>
        <begin position="23"/>
        <end position="49"/>
    </location>
</feature>
<feature type="peptide" id="PRO_5004850996" description="Conotoxin Vc7.2" evidence="3">
    <location>
        <begin position="50"/>
        <end position="74"/>
    </location>
</feature>
<feature type="disulfide bond" evidence="3 9">
    <location>
        <begin position="53"/>
        <end position="63"/>
    </location>
</feature>
<feature type="disulfide bond" evidence="3 9">
    <location>
        <begin position="58"/>
        <end position="68"/>
    </location>
</feature>
<feature type="disulfide bond" evidence="3 9">
    <location>
        <begin position="62"/>
        <end position="73"/>
    </location>
</feature>
<feature type="strand" evidence="10">
    <location>
        <begin position="54"/>
        <end position="56"/>
    </location>
</feature>
<feature type="strand" evidence="10">
    <location>
        <begin position="59"/>
        <end position="64"/>
    </location>
</feature>
<feature type="strand" evidence="10">
    <location>
        <begin position="67"/>
        <end position="69"/>
    </location>
</feature>
<keyword id="KW-0002">3D-structure</keyword>
<keyword id="KW-0903">Direct protein sequencing</keyword>
<keyword id="KW-1015">Disulfide bond</keyword>
<keyword id="KW-0964">Secreted</keyword>
<keyword id="KW-0732">Signal</keyword>
<keyword id="KW-0800">Toxin</keyword>
<dbReference type="EMBL" id="GAIH01000011">
    <property type="protein sequence ID" value="JAB84706.1"/>
    <property type="molecule type" value="mRNA"/>
</dbReference>
<dbReference type="PDB" id="6Q5Z">
    <property type="method" value="NMR"/>
    <property type="chains" value="A=50-74"/>
</dbReference>
<dbReference type="PDBsum" id="6Q5Z"/>
<dbReference type="BMRB" id="W4VS16"/>
<dbReference type="SMR" id="W4VS16"/>
<dbReference type="TCDB" id="8.B.37.1.1">
    <property type="family name" value="the conotoxin-teretoxin (c-t) family"/>
</dbReference>
<dbReference type="GO" id="GO:0005576">
    <property type="term" value="C:extracellular region"/>
    <property type="evidence" value="ECO:0007669"/>
    <property type="project" value="UniProtKB-SubCell"/>
</dbReference>
<dbReference type="GO" id="GO:0090729">
    <property type="term" value="F:toxin activity"/>
    <property type="evidence" value="ECO:0007669"/>
    <property type="project" value="UniProtKB-KW"/>
</dbReference>
<accession>W4VS16</accession>
<name>H72_CONVC</name>
<organism>
    <name type="scientific">Conus victoriae</name>
    <name type="common">Queen Victoria cone</name>
    <dbReference type="NCBI Taxonomy" id="319920"/>
    <lineage>
        <taxon>Eukaryota</taxon>
        <taxon>Metazoa</taxon>
        <taxon>Spiralia</taxon>
        <taxon>Lophotrochozoa</taxon>
        <taxon>Mollusca</taxon>
        <taxon>Gastropoda</taxon>
        <taxon>Caenogastropoda</taxon>
        <taxon>Neogastropoda</taxon>
        <taxon>Conoidea</taxon>
        <taxon>Conidae</taxon>
        <taxon>Conus</taxon>
        <taxon>Cylinder</taxon>
    </lineage>
</organism>
<comment type="function">
    <text evidence="3">Probable toxin with unknown function (Probable). Does not produce any changes in intracellular calcium levels in mouse dorsal root ganglion cells (PubMed:30975904). In vivo, does not produce behavioral changes when intracranially injected into mice (PubMed:30975904).</text>
</comment>
<comment type="subcellular location">
    <subcellularLocation>
        <location evidence="2">Secreted</location>
    </subcellularLocation>
</comment>
<comment type="tissue specificity">
    <text evidence="7">Expressed by the venom duct.</text>
</comment>
<comment type="domain">
    <text evidence="6">The cysteine framework is VI/VII (C-C-CC-C-C).</text>
</comment>
<comment type="domain">
    <text evidence="8">Displays a mini-granulin fold, a structure composed of two short, stacked beta-hairpins connected by two parallel disulfide bonds. This newly described fold is derived from the same cysteine connectivity as knottins (ICK fold). The name 'mini-granulin fold' comes from the structural homology with the N-terminal region of the human granulin.</text>
</comment>
<comment type="mass spectrometry"/>
<comment type="similarity">
    <text evidence="7">Belongs to the conotoxin H superfamily.</text>
</comment>
<evidence type="ECO:0000255" key="1"/>
<evidence type="ECO:0000269" key="2">
    <source>
    </source>
</evidence>
<evidence type="ECO:0000269" key="3">
    <source>
    </source>
</evidence>
<evidence type="ECO:0000303" key="4">
    <source>
    </source>
</evidence>
<evidence type="ECO:0000303" key="5">
    <source>
    </source>
</evidence>
<evidence type="ECO:0000305" key="6"/>
<evidence type="ECO:0000305" key="7">
    <source>
    </source>
</evidence>
<evidence type="ECO:0000305" key="8">
    <source>
    </source>
</evidence>
<evidence type="ECO:0007744" key="9">
    <source>
        <dbReference type="PDB" id="6Q5Z"/>
    </source>
</evidence>
<evidence type="ECO:0007829" key="10">
    <source>
        <dbReference type="PDB" id="6Q5Z"/>
    </source>
</evidence>
<proteinExistence type="evidence at protein level"/>